<protein>
    <recommendedName>
        <fullName evidence="6">Glutathione S-transferase-like protein FUS3</fullName>
        <ecNumber evidence="6">2.5.1.-</ecNumber>
    </recommendedName>
    <alternativeName>
        <fullName evidence="5">Fusarin biosynthesis protein 3</fullName>
    </alternativeName>
</protein>
<sequence>MPNARVFKILAAAKLNNIALEIPAYQHGVTNKSAEFLLKFPAGKVPAFEGPDGFCLVESDAIAQYVAQSGPQASQLLGQDAMSSAKIRQWISFFAEEIYPTVLDLVMWRVGLGAFDETTETKALTQLVYGLSVLEKHLGTGALLVGDKLTLADLTGASTLLWAFMHIVDEPMRQQYPNVVAWYLKVVQNEEVEEVFGKPNFIEKRRLGAK</sequence>
<feature type="chain" id="PRO_0000437367" description="Glutathione S-transferase-like protein FUS3">
    <location>
        <begin position="1"/>
        <end position="210"/>
    </location>
</feature>
<feature type="domain" description="GST N-terminal" evidence="1">
    <location>
        <begin position="1"/>
        <end position="74"/>
    </location>
</feature>
<feature type="domain" description="GST C-terminal" evidence="2">
    <location>
        <begin position="80"/>
        <end position="206"/>
    </location>
</feature>
<accession>S0EHD0</accession>
<evidence type="ECO:0000255" key="1">
    <source>
        <dbReference type="PROSITE-ProRule" id="PRU00684"/>
    </source>
</evidence>
<evidence type="ECO:0000255" key="2">
    <source>
        <dbReference type="PROSITE-ProRule" id="PRU00685"/>
    </source>
</evidence>
<evidence type="ECO:0000269" key="3">
    <source>
    </source>
</evidence>
<evidence type="ECO:0000269" key="4">
    <source>
    </source>
</evidence>
<evidence type="ECO:0000303" key="5">
    <source>
    </source>
</evidence>
<evidence type="ECO:0000305" key="6"/>
<reference key="1">
    <citation type="journal article" date="2013" name="PLoS Pathog.">
        <title>Deciphering the cryptic genome: genome-wide analyses of the rice pathogen Fusarium fujikuroi reveal complex regulation of secondary metabolism and novel metabolites.</title>
        <authorList>
            <person name="Wiemann P."/>
            <person name="Sieber C.M.K."/>
            <person name="von Bargen K.W."/>
            <person name="Studt L."/>
            <person name="Niehaus E.-M."/>
            <person name="Espino J.J."/>
            <person name="Huss K."/>
            <person name="Michielse C.B."/>
            <person name="Albermann S."/>
            <person name="Wagner D."/>
            <person name="Bergner S.V."/>
            <person name="Connolly L.R."/>
            <person name="Fischer A."/>
            <person name="Reuter G."/>
            <person name="Kleigrewe K."/>
            <person name="Bald T."/>
            <person name="Wingfield B.D."/>
            <person name="Ophir R."/>
            <person name="Freeman S."/>
            <person name="Hippler M."/>
            <person name="Smith K.M."/>
            <person name="Brown D.W."/>
            <person name="Proctor R.H."/>
            <person name="Muensterkoetter M."/>
            <person name="Freitag M."/>
            <person name="Humpf H.-U."/>
            <person name="Gueldener U."/>
            <person name="Tudzynski B."/>
        </authorList>
    </citation>
    <scope>NUCLEOTIDE SEQUENCE [LARGE SCALE GENOMIC DNA]</scope>
    <source>
        <strain>CBS 195.34 / IMI 58289 / NRRL A-6831</strain>
    </source>
</reference>
<reference key="2">
    <citation type="journal article" date="2010" name="Mol. Microbiol.">
        <title>FfVel1 and FfLae1, components of a velvet-like complex in Fusarium fujikuroi, affect differentiation, secondary metabolism and virulence.</title>
        <authorList>
            <person name="Wiemann P."/>
            <person name="Brown D.W."/>
            <person name="Kleigrewe K."/>
            <person name="Bok J.W."/>
            <person name="Keller N.P."/>
            <person name="Humpf H.U."/>
            <person name="Tudzynski B."/>
        </authorList>
    </citation>
    <scope>INDUCTION</scope>
</reference>
<reference key="3">
    <citation type="journal article" date="2013" name="Chem. Biol.">
        <title>Genetic manipulation of the Fusarium fujikuroi fusarin gene cluster yields insight into the complex regulation and fusarin biosynthetic pathway.</title>
        <authorList>
            <person name="Niehaus E.M."/>
            <person name="Kleigrewe K."/>
            <person name="Wiemann P."/>
            <person name="Studt L."/>
            <person name="Sieber C.M."/>
            <person name="Connolly L.R."/>
            <person name="Freitag M."/>
            <person name="Gueldener U."/>
            <person name="Tudzynski B."/>
            <person name="Humpf H.U."/>
        </authorList>
    </citation>
    <scope>FUNCTION</scope>
    <scope>INDUCTION</scope>
    <scope>DISRUPTION PHENOTYPE</scope>
</reference>
<name>FUS3_GIBF5</name>
<organism>
    <name type="scientific">Gibberella fujikuroi (strain CBS 195.34 / IMI 58289 / NRRL A-6831)</name>
    <name type="common">Bakanae and foot rot disease fungus</name>
    <name type="synonym">Fusarium fujikuroi</name>
    <dbReference type="NCBI Taxonomy" id="1279085"/>
    <lineage>
        <taxon>Eukaryota</taxon>
        <taxon>Fungi</taxon>
        <taxon>Dikarya</taxon>
        <taxon>Ascomycota</taxon>
        <taxon>Pezizomycotina</taxon>
        <taxon>Sordariomycetes</taxon>
        <taxon>Hypocreomycetidae</taxon>
        <taxon>Hypocreales</taxon>
        <taxon>Nectriaceae</taxon>
        <taxon>Fusarium</taxon>
        <taxon>Fusarium fujikuroi species complex</taxon>
    </lineage>
</organism>
<keyword id="KW-1185">Reference proteome</keyword>
<keyword id="KW-0808">Transferase</keyword>
<gene>
    <name evidence="5" type="primary">FUS3</name>
    <name type="ORF">FFUJ_10056</name>
</gene>
<dbReference type="EC" id="2.5.1.-" evidence="6"/>
<dbReference type="EMBL" id="HF679031">
    <property type="protein sequence ID" value="CCT73262.1"/>
    <property type="molecule type" value="Genomic_DNA"/>
</dbReference>
<dbReference type="SMR" id="S0EHD0"/>
<dbReference type="STRING" id="1279085.S0EHD0"/>
<dbReference type="EnsemblFungi" id="CCT73262">
    <property type="protein sequence ID" value="CCT73262"/>
    <property type="gene ID" value="FFUJ_10056"/>
</dbReference>
<dbReference type="VEuPathDB" id="FungiDB:FFUJ_10056"/>
<dbReference type="HOGENOM" id="CLU_011226_3_2_1"/>
<dbReference type="Proteomes" id="UP000016800">
    <property type="component" value="Chromosome 9"/>
</dbReference>
<dbReference type="GO" id="GO:0005737">
    <property type="term" value="C:cytoplasm"/>
    <property type="evidence" value="ECO:0007669"/>
    <property type="project" value="TreeGrafter"/>
</dbReference>
<dbReference type="GO" id="GO:0005634">
    <property type="term" value="C:nucleus"/>
    <property type="evidence" value="ECO:0007669"/>
    <property type="project" value="TreeGrafter"/>
</dbReference>
<dbReference type="GO" id="GO:0016740">
    <property type="term" value="F:transferase activity"/>
    <property type="evidence" value="ECO:0007669"/>
    <property type="project" value="UniProtKB-KW"/>
</dbReference>
<dbReference type="GO" id="GO:0006414">
    <property type="term" value="P:translational elongation"/>
    <property type="evidence" value="ECO:0007669"/>
    <property type="project" value="TreeGrafter"/>
</dbReference>
<dbReference type="CDD" id="cd03181">
    <property type="entry name" value="GST_C_EF1Bgamma_like"/>
    <property type="match status" value="1"/>
</dbReference>
<dbReference type="CDD" id="cd03044">
    <property type="entry name" value="GST_N_EF1Bgamma"/>
    <property type="match status" value="1"/>
</dbReference>
<dbReference type="FunFam" id="1.20.1050.10:FF:000006">
    <property type="entry name" value="Elongation factor 1 gamma"/>
    <property type="match status" value="1"/>
</dbReference>
<dbReference type="FunFam" id="3.40.30.10:FF:000142">
    <property type="entry name" value="Elongation factor 1 gamma"/>
    <property type="match status" value="1"/>
</dbReference>
<dbReference type="Gene3D" id="1.20.1050.10">
    <property type="match status" value="1"/>
</dbReference>
<dbReference type="Gene3D" id="3.40.30.10">
    <property type="entry name" value="Glutaredoxin"/>
    <property type="match status" value="1"/>
</dbReference>
<dbReference type="InterPro" id="IPR050802">
    <property type="entry name" value="EF-GSTs"/>
</dbReference>
<dbReference type="InterPro" id="IPR010987">
    <property type="entry name" value="Glutathione-S-Trfase_C-like"/>
</dbReference>
<dbReference type="InterPro" id="IPR036282">
    <property type="entry name" value="Glutathione-S-Trfase_C_sf"/>
</dbReference>
<dbReference type="InterPro" id="IPR040079">
    <property type="entry name" value="Glutathione_S-Trfase"/>
</dbReference>
<dbReference type="InterPro" id="IPR004045">
    <property type="entry name" value="Glutathione_S-Trfase_N"/>
</dbReference>
<dbReference type="InterPro" id="IPR004046">
    <property type="entry name" value="GST_C"/>
</dbReference>
<dbReference type="InterPro" id="IPR036249">
    <property type="entry name" value="Thioredoxin-like_sf"/>
</dbReference>
<dbReference type="PANTHER" id="PTHR43986">
    <property type="entry name" value="ELONGATION FACTOR 1-GAMMA"/>
    <property type="match status" value="1"/>
</dbReference>
<dbReference type="PANTHER" id="PTHR43986:SF10">
    <property type="entry name" value="ELONGATION FACTOR EEF-1B GAMMA SUBUNIT, PUTATIVE (AFU_ORTHOLOGUE AFUA_1G17120)-RELATED"/>
    <property type="match status" value="1"/>
</dbReference>
<dbReference type="Pfam" id="PF00043">
    <property type="entry name" value="GST_C"/>
    <property type="match status" value="1"/>
</dbReference>
<dbReference type="Pfam" id="PF02798">
    <property type="entry name" value="GST_N"/>
    <property type="match status" value="1"/>
</dbReference>
<dbReference type="SFLD" id="SFLDS00019">
    <property type="entry name" value="Glutathione_Transferase_(cytos"/>
    <property type="match status" value="1"/>
</dbReference>
<dbReference type="SFLD" id="SFLDG00358">
    <property type="entry name" value="Main_(cytGST)"/>
    <property type="match status" value="1"/>
</dbReference>
<dbReference type="SUPFAM" id="SSF47616">
    <property type="entry name" value="GST C-terminal domain-like"/>
    <property type="match status" value="1"/>
</dbReference>
<dbReference type="SUPFAM" id="SSF52833">
    <property type="entry name" value="Thioredoxin-like"/>
    <property type="match status" value="1"/>
</dbReference>
<dbReference type="PROSITE" id="PS50405">
    <property type="entry name" value="GST_CTER"/>
    <property type="match status" value="1"/>
</dbReference>
<dbReference type="PROSITE" id="PS50404">
    <property type="entry name" value="GST_NTER"/>
    <property type="match status" value="1"/>
</dbReference>
<comment type="function">
    <text evidence="4">Glutathione S-transferase-like protein; part of the gene cluster that mediates the biosynthesis of the mycotoxin fusarin C (PubMed:23932525). Within the cluster, FUS1, FUS2, FUS8 and FUS9 are sufficient for fusarin production (PubMed:23932525). The other FUS cluster members are not essential for fusarin C biosynthesis (PubMed:23932525).</text>
</comment>
<comment type="induction">
    <text evidence="3 4">Expressed under high amounts of nitrogen via regulation by GLN1 (PubMed:23932525). Moreover, components of the fungal-specific velvet complex VEL1, VEL2 and LAE1 act also as positive regulators of expression (PubMed:20572938, PubMed:23932525). Finally, expression is induced under acidic conditions in a PACC-independent manner (PubMed:23932525).</text>
</comment>
<comment type="disruption phenotype">
    <text evidence="4">Does not alter fusarin C production (PubMed:23932525).</text>
</comment>
<comment type="similarity">
    <text evidence="6">Belongs to the GST superfamily.</text>
</comment>
<proteinExistence type="evidence at transcript level"/>